<feature type="chain" id="PRO_0000107180" description="Uncharacterized protein MJ1127">
    <location>
        <begin position="1"/>
        <end position="280"/>
    </location>
</feature>
<comment type="similarity">
    <text evidence="1">Belongs to the metallo-dependent hydrolases superfamily.</text>
</comment>
<name>Y1127_METJA</name>
<keyword id="KW-1185">Reference proteome</keyword>
<evidence type="ECO:0000305" key="1"/>
<proteinExistence type="inferred from homology"/>
<accession>Q58527</accession>
<protein>
    <recommendedName>
        <fullName>Uncharacterized protein MJ1127</fullName>
    </recommendedName>
</protein>
<sequence>MDVLKSLPVTDNHIHVDDKHGYGAEKVAKTFYNAGGKVMIVLNKPTFDGNLTASMDILVRDVEIINKNTPVKAFGLVGVHPAELTYLMKFMSLEEAKQRIVDALNYAKKLVEEYDFIVGIGEVGRPHYPVSEDVWKASNEILKYCMELAKDIGCAIQIHAESSTEEQFKEFSEMAKEVGLNPEKVVKHHCGNMVLEGERYGIFPSILASRVNEDVVKKSLRFVMETDYIDDLKRPGVALGIKTVPRVTRRLIEKGVLDEEGVYKIHKENIERIYDMDLEL</sequence>
<organism>
    <name type="scientific">Methanocaldococcus jannaschii (strain ATCC 43067 / DSM 2661 / JAL-1 / JCM 10045 / NBRC 100440)</name>
    <name type="common">Methanococcus jannaschii</name>
    <dbReference type="NCBI Taxonomy" id="243232"/>
    <lineage>
        <taxon>Archaea</taxon>
        <taxon>Methanobacteriati</taxon>
        <taxon>Methanobacteriota</taxon>
        <taxon>Methanomada group</taxon>
        <taxon>Methanococci</taxon>
        <taxon>Methanococcales</taxon>
        <taxon>Methanocaldococcaceae</taxon>
        <taxon>Methanocaldococcus</taxon>
    </lineage>
</organism>
<gene>
    <name type="ordered locus">MJ1127</name>
</gene>
<reference key="1">
    <citation type="journal article" date="1996" name="Science">
        <title>Complete genome sequence of the methanogenic archaeon, Methanococcus jannaschii.</title>
        <authorList>
            <person name="Bult C.J."/>
            <person name="White O."/>
            <person name="Olsen G.J."/>
            <person name="Zhou L."/>
            <person name="Fleischmann R.D."/>
            <person name="Sutton G.G."/>
            <person name="Blake J.A."/>
            <person name="FitzGerald L.M."/>
            <person name="Clayton R.A."/>
            <person name="Gocayne J.D."/>
            <person name="Kerlavage A.R."/>
            <person name="Dougherty B.A."/>
            <person name="Tomb J.-F."/>
            <person name="Adams M.D."/>
            <person name="Reich C.I."/>
            <person name="Overbeek R."/>
            <person name="Kirkness E.F."/>
            <person name="Weinstock K.G."/>
            <person name="Merrick J.M."/>
            <person name="Glodek A."/>
            <person name="Scott J.L."/>
            <person name="Geoghagen N.S.M."/>
            <person name="Weidman J.F."/>
            <person name="Fuhrmann J.L."/>
            <person name="Nguyen D."/>
            <person name="Utterback T.R."/>
            <person name="Kelley J.M."/>
            <person name="Peterson J.D."/>
            <person name="Sadow P.W."/>
            <person name="Hanna M.C."/>
            <person name="Cotton M.D."/>
            <person name="Roberts K.M."/>
            <person name="Hurst M.A."/>
            <person name="Kaine B.P."/>
            <person name="Borodovsky M."/>
            <person name="Klenk H.-P."/>
            <person name="Fraser C.M."/>
            <person name="Smith H.O."/>
            <person name="Woese C.R."/>
            <person name="Venter J.C."/>
        </authorList>
    </citation>
    <scope>NUCLEOTIDE SEQUENCE [LARGE SCALE GENOMIC DNA]</scope>
    <source>
        <strain>ATCC 43067 / DSM 2661 / JAL-1 / JCM 10045 / NBRC 100440</strain>
    </source>
</reference>
<dbReference type="EMBL" id="L77117">
    <property type="protein sequence ID" value="AAB99129.1"/>
    <property type="molecule type" value="Genomic_DNA"/>
</dbReference>
<dbReference type="PIR" id="F64440">
    <property type="entry name" value="F64440"/>
</dbReference>
<dbReference type="RefSeq" id="WP_010870638.1">
    <property type="nucleotide sequence ID" value="NC_000909.1"/>
</dbReference>
<dbReference type="SMR" id="Q58527"/>
<dbReference type="STRING" id="243232.MJ_1127"/>
<dbReference type="PaxDb" id="243232-MJ_1127"/>
<dbReference type="DNASU" id="1452023"/>
<dbReference type="EnsemblBacteria" id="AAB99129">
    <property type="protein sequence ID" value="AAB99129"/>
    <property type="gene ID" value="MJ_1127"/>
</dbReference>
<dbReference type="GeneID" id="1452023"/>
<dbReference type="KEGG" id="mja:MJ_1127"/>
<dbReference type="eggNOG" id="arCOG00893">
    <property type="taxonomic scope" value="Archaea"/>
</dbReference>
<dbReference type="HOGENOM" id="CLU_985571_0_0_2"/>
<dbReference type="InParanoid" id="Q58527"/>
<dbReference type="OrthoDB" id="52767at2157"/>
<dbReference type="PhylomeDB" id="Q58527"/>
<dbReference type="Proteomes" id="UP000000805">
    <property type="component" value="Chromosome"/>
</dbReference>
<dbReference type="GO" id="GO:0016788">
    <property type="term" value="F:hydrolase activity, acting on ester bonds"/>
    <property type="evidence" value="ECO:0007669"/>
    <property type="project" value="InterPro"/>
</dbReference>
<dbReference type="Gene3D" id="3.20.20.140">
    <property type="entry name" value="Metal-dependent hydrolases"/>
    <property type="match status" value="1"/>
</dbReference>
<dbReference type="InterPro" id="IPR032466">
    <property type="entry name" value="Metal_Hydrolase"/>
</dbReference>
<dbReference type="InterPro" id="IPR001130">
    <property type="entry name" value="TatD-like"/>
</dbReference>
<dbReference type="InterPro" id="IPR011589">
    <property type="entry name" value="UCP004961"/>
</dbReference>
<dbReference type="PANTHER" id="PTHR42206:SF1">
    <property type="entry name" value="METAL-DEPENDENT HYDROLASE"/>
    <property type="match status" value="1"/>
</dbReference>
<dbReference type="PANTHER" id="PTHR42206">
    <property type="entry name" value="METAL-DEPENDENT HYDROLASE-RELATED"/>
    <property type="match status" value="1"/>
</dbReference>
<dbReference type="Pfam" id="PF01026">
    <property type="entry name" value="TatD_DNase"/>
    <property type="match status" value="1"/>
</dbReference>
<dbReference type="PIRSF" id="PIRSF004961">
    <property type="entry name" value="UCP004961_TatD"/>
    <property type="match status" value="1"/>
</dbReference>
<dbReference type="SUPFAM" id="SSF51556">
    <property type="entry name" value="Metallo-dependent hydrolases"/>
    <property type="match status" value="1"/>
</dbReference>